<gene>
    <name type="primary">trpp-3</name>
    <name type="ORF">ZK1098.5</name>
</gene>
<proteinExistence type="evidence at protein level"/>
<feature type="chain" id="PRO_0000211577" description="Trafficking protein particle complex subunit 3 homolog">
    <location>
        <begin position="1"/>
        <end position="181"/>
    </location>
</feature>
<feature type="lipid moiety-binding region" description="S-palmitoyl cysteine" evidence="1">
    <location>
        <position position="70"/>
    </location>
</feature>
<organism>
    <name type="scientific">Caenorhabditis elegans</name>
    <dbReference type="NCBI Taxonomy" id="6239"/>
    <lineage>
        <taxon>Eukaryota</taxon>
        <taxon>Metazoa</taxon>
        <taxon>Ecdysozoa</taxon>
        <taxon>Nematoda</taxon>
        <taxon>Chromadorea</taxon>
        <taxon>Rhabditida</taxon>
        <taxon>Rhabditina</taxon>
        <taxon>Rhabditomorpha</taxon>
        <taxon>Rhabditoidea</taxon>
        <taxon>Rhabditidae</taxon>
        <taxon>Peloderinae</taxon>
        <taxon>Caenorhabditis</taxon>
    </lineage>
</organism>
<dbReference type="EMBL" id="Z22176">
    <property type="protein sequence ID" value="CAA80133.1"/>
    <property type="molecule type" value="Genomic_DNA"/>
</dbReference>
<dbReference type="PIR" id="S40928">
    <property type="entry name" value="S40928"/>
</dbReference>
<dbReference type="RefSeq" id="NP_499100.1">
    <property type="nucleotide sequence ID" value="NM_066699.7"/>
</dbReference>
<dbReference type="SMR" id="P34605"/>
<dbReference type="BioGRID" id="41539">
    <property type="interactions" value="8"/>
</dbReference>
<dbReference type="DIP" id="DIP-25615N"/>
<dbReference type="FunCoup" id="P34605">
    <property type="interactions" value="2731"/>
</dbReference>
<dbReference type="IntAct" id="P34605">
    <property type="interactions" value="7"/>
</dbReference>
<dbReference type="STRING" id="6239.ZK1098.5.1"/>
<dbReference type="PaxDb" id="6239-ZK1098.5"/>
<dbReference type="PeptideAtlas" id="P34605"/>
<dbReference type="EnsemblMetazoa" id="ZK1098.5.1">
    <property type="protein sequence ID" value="ZK1098.5.1"/>
    <property type="gene ID" value="WBGene00014222"/>
</dbReference>
<dbReference type="GeneID" id="176344"/>
<dbReference type="KEGG" id="cel:CELE_ZK1098.5"/>
<dbReference type="UCSC" id="ZK1098.5">
    <property type="organism name" value="c. elegans"/>
</dbReference>
<dbReference type="AGR" id="WB:WBGene00014222"/>
<dbReference type="CTD" id="176344"/>
<dbReference type="WormBase" id="ZK1098.5">
    <property type="protein sequence ID" value="CE00368"/>
    <property type="gene ID" value="WBGene00014222"/>
    <property type="gene designation" value="trpp-3"/>
</dbReference>
<dbReference type="eggNOG" id="KOG3330">
    <property type="taxonomic scope" value="Eukaryota"/>
</dbReference>
<dbReference type="GeneTree" id="ENSGT00390000003880"/>
<dbReference type="HOGENOM" id="CLU_087110_0_0_1"/>
<dbReference type="InParanoid" id="P34605"/>
<dbReference type="OMA" id="MVQMQVQ"/>
<dbReference type="OrthoDB" id="10262857at2759"/>
<dbReference type="PhylomeDB" id="P34605"/>
<dbReference type="Reactome" id="R-CEL-204005">
    <property type="pathway name" value="COPII-mediated vesicle transport"/>
</dbReference>
<dbReference type="Reactome" id="R-CEL-8876198">
    <property type="pathway name" value="RAB GEFs exchange GTP for GDP on RABs"/>
</dbReference>
<dbReference type="PRO" id="PR:P34605"/>
<dbReference type="Proteomes" id="UP000001940">
    <property type="component" value="Chromosome III"/>
</dbReference>
<dbReference type="Bgee" id="WBGene00014222">
    <property type="expression patterns" value="Expressed in germ line (C elegans) and 4 other cell types or tissues"/>
</dbReference>
<dbReference type="GO" id="GO:0033106">
    <property type="term" value="C:cis-Golgi network membrane"/>
    <property type="evidence" value="ECO:0000318"/>
    <property type="project" value="GO_Central"/>
</dbReference>
<dbReference type="GO" id="GO:0005829">
    <property type="term" value="C:cytosol"/>
    <property type="evidence" value="ECO:0000318"/>
    <property type="project" value="GO_Central"/>
</dbReference>
<dbReference type="GO" id="GO:0005783">
    <property type="term" value="C:endoplasmic reticulum"/>
    <property type="evidence" value="ECO:0007669"/>
    <property type="project" value="UniProtKB-SubCell"/>
</dbReference>
<dbReference type="GO" id="GO:0030008">
    <property type="term" value="C:TRAPP complex"/>
    <property type="evidence" value="ECO:0000318"/>
    <property type="project" value="GO_Central"/>
</dbReference>
<dbReference type="GO" id="GO:0042338">
    <property type="term" value="P:cuticle development involved in collagen and cuticulin-based cuticle molting cycle"/>
    <property type="evidence" value="ECO:0000315"/>
    <property type="project" value="WormBase"/>
</dbReference>
<dbReference type="GO" id="GO:0006888">
    <property type="term" value="P:endoplasmic reticulum to Golgi vesicle-mediated transport"/>
    <property type="evidence" value="ECO:0000318"/>
    <property type="project" value="GO_Central"/>
</dbReference>
<dbReference type="GO" id="GO:0006891">
    <property type="term" value="P:intra-Golgi vesicle-mediated transport"/>
    <property type="evidence" value="ECO:0000318"/>
    <property type="project" value="GO_Central"/>
</dbReference>
<dbReference type="GO" id="GO:0035264">
    <property type="term" value="P:multicellular organism growth"/>
    <property type="evidence" value="ECO:0000315"/>
    <property type="project" value="WormBase"/>
</dbReference>
<dbReference type="GO" id="GO:0009306">
    <property type="term" value="P:protein secretion"/>
    <property type="evidence" value="ECO:0000315"/>
    <property type="project" value="WormBase"/>
</dbReference>
<dbReference type="CDD" id="cd14942">
    <property type="entry name" value="TRAPPC3_bet3"/>
    <property type="match status" value="1"/>
</dbReference>
<dbReference type="FunFam" id="3.30.1380.20:FF:000022">
    <property type="entry name" value="Trafficking protein particle complex subunit 3 homolog"/>
    <property type="match status" value="1"/>
</dbReference>
<dbReference type="Gene3D" id="3.30.1380.20">
    <property type="entry name" value="Trafficking protein particle complex subunit 3"/>
    <property type="match status" value="1"/>
</dbReference>
<dbReference type="InterPro" id="IPR016721">
    <property type="entry name" value="Bet3"/>
</dbReference>
<dbReference type="InterPro" id="IPR024096">
    <property type="entry name" value="NO_sig/Golgi_transp_ligand-bd"/>
</dbReference>
<dbReference type="InterPro" id="IPR007194">
    <property type="entry name" value="TRAPP_component"/>
</dbReference>
<dbReference type="PANTHER" id="PTHR13048">
    <property type="entry name" value="TRAFFICKING PROTEIN PARTICLE COMPLEX SUBUNIT 3"/>
    <property type="match status" value="1"/>
</dbReference>
<dbReference type="Pfam" id="PF04051">
    <property type="entry name" value="TRAPP"/>
    <property type="match status" value="1"/>
</dbReference>
<dbReference type="PIRSF" id="PIRSF018293">
    <property type="entry name" value="TRAPP_I_complex_Bet3"/>
    <property type="match status" value="1"/>
</dbReference>
<dbReference type="SUPFAM" id="SSF111126">
    <property type="entry name" value="Ligand-binding domain in the NO signalling and Golgi transport"/>
    <property type="match status" value="1"/>
</dbReference>
<name>TPPC3_CAEEL</name>
<reference key="1">
    <citation type="journal article" date="1994" name="Nature">
        <title>2.2 Mb of contiguous nucleotide sequence from chromosome III of C. elegans.</title>
        <authorList>
            <person name="Wilson R."/>
            <person name="Ainscough R."/>
            <person name="Anderson K."/>
            <person name="Baynes C."/>
            <person name="Berks M."/>
            <person name="Bonfield J."/>
            <person name="Burton J."/>
            <person name="Connell M."/>
            <person name="Copsey T."/>
            <person name="Cooper J."/>
            <person name="Coulson A."/>
            <person name="Craxton M."/>
            <person name="Dear S."/>
            <person name="Du Z."/>
            <person name="Durbin R."/>
            <person name="Favello A."/>
            <person name="Fraser A."/>
            <person name="Fulton L."/>
            <person name="Gardner A."/>
            <person name="Green P."/>
            <person name="Hawkins T."/>
            <person name="Hillier L."/>
            <person name="Jier M."/>
            <person name="Johnston L."/>
            <person name="Jones M."/>
            <person name="Kershaw J."/>
            <person name="Kirsten J."/>
            <person name="Laisster N."/>
            <person name="Latreille P."/>
            <person name="Lightning J."/>
            <person name="Lloyd C."/>
            <person name="Mortimore B."/>
            <person name="O'Callaghan M."/>
            <person name="Parsons J."/>
            <person name="Percy C."/>
            <person name="Rifken L."/>
            <person name="Roopra A."/>
            <person name="Saunders D."/>
            <person name="Shownkeen R."/>
            <person name="Sims M."/>
            <person name="Smaldon N."/>
            <person name="Smith A."/>
            <person name="Smith M."/>
            <person name="Sonnhammer E."/>
            <person name="Staden R."/>
            <person name="Sulston J."/>
            <person name="Thierry-Mieg J."/>
            <person name="Thomas K."/>
            <person name="Vaudin M."/>
            <person name="Vaughan K."/>
            <person name="Waterston R."/>
            <person name="Watson A."/>
            <person name="Weinstock L."/>
            <person name="Wilkinson-Sproat J."/>
            <person name="Wohldman P."/>
        </authorList>
    </citation>
    <scope>NUCLEOTIDE SEQUENCE [LARGE SCALE GENOMIC DNA]</scope>
    <source>
        <strain>Bristol N2</strain>
    </source>
</reference>
<reference key="2">
    <citation type="journal article" date="1998" name="Science">
        <title>Genome sequence of the nematode C. elegans: a platform for investigating biology.</title>
        <authorList>
            <consortium name="The C. elegans sequencing consortium"/>
        </authorList>
    </citation>
    <scope>NUCLEOTIDE SEQUENCE [LARGE SCALE GENOMIC DNA]</scope>
    <source>
        <strain>Bristol N2</strain>
    </source>
</reference>
<reference key="3">
    <citation type="journal article" date="2006" name="Nat. Cell Biol.">
        <title>The endocytic pathway mediates cell entry of dsRNA to induce RNAi silencing.</title>
        <authorList>
            <person name="Saleh M.-C."/>
            <person name="van Rij R.P."/>
            <person name="Hekele A."/>
            <person name="Gillis A."/>
            <person name="Foley E."/>
            <person name="O'Farrell P.H."/>
            <person name="Andino R."/>
        </authorList>
    </citation>
    <scope>FUNCTION</scope>
</reference>
<protein>
    <recommendedName>
        <fullName evidence="1">Trafficking protein particle complex subunit 3 homolog</fullName>
    </recommendedName>
</protein>
<evidence type="ECO:0000250" key="1">
    <source>
        <dbReference type="UniProtKB" id="O43617"/>
    </source>
</evidence>
<evidence type="ECO:0000250" key="2">
    <source>
        <dbReference type="UniProtKB" id="Q04183"/>
    </source>
</evidence>
<evidence type="ECO:0000250" key="3">
    <source>
        <dbReference type="UniProtKB" id="Q9CQP2"/>
    </source>
</evidence>
<evidence type="ECO:0000269" key="4">
    <source>
    </source>
</evidence>
<evidence type="ECO:0000305" key="5"/>
<comment type="function">
    <text evidence="1 4">May play a role in vesicular transport from endoplasmic reticulum to Golgi (By similarity). Required for the systemic spread of the RNAi response (PubMed:16862146).</text>
</comment>
<comment type="subunit">
    <text evidence="1">Homodimer. Part of the multisubunit TRAPP (transport protein particle) complex (By similarity).</text>
</comment>
<comment type="interaction">
    <interactant intactId="EBI-312149">
        <id>P34605</id>
    </interactant>
    <interactant intactId="EBI-312154">
        <id>Q9U389</id>
        <label>allo-1</label>
    </interactant>
    <organismsDiffer>false</organismsDiffer>
    <experiments>2</experiments>
</comment>
<comment type="interaction">
    <interactant intactId="EBI-312149">
        <id>P34605</id>
    </interactant>
    <interactant intactId="EBI-321262">
        <id>Q20100</id>
        <label>trpp-4</label>
    </interactant>
    <organismsDiffer>false</organismsDiffer>
    <experiments>6</experiments>
</comment>
<comment type="subcellular location">
    <subcellularLocation>
        <location evidence="2">Golgi apparatus</location>
        <location evidence="2">cis-Golgi network</location>
    </subcellularLocation>
    <subcellularLocation>
        <location evidence="3">Endoplasmic reticulum</location>
    </subcellularLocation>
</comment>
<comment type="similarity">
    <text evidence="5">Belongs to the TRAPP small subunits family. BET3 subfamily.</text>
</comment>
<accession>P34605</accession>
<keyword id="KW-0256">Endoplasmic reticulum</keyword>
<keyword id="KW-0931">ER-Golgi transport</keyword>
<keyword id="KW-0333">Golgi apparatus</keyword>
<keyword id="KW-0449">Lipoprotein</keyword>
<keyword id="KW-0564">Palmitate</keyword>
<keyword id="KW-1185">Reference proteome</keyword>
<keyword id="KW-0813">Transport</keyword>
<sequence>MSKAIKQNLADSKKMSAELFCLTYGAMVTEMLKDYEDPKDVTIQLDKMGFNMGTRLADDFLAKNANVPRCVDTRQIADVLCRNAIPCYLGISATASSWTSGDREFTITLEANPLTELVQVPAHLVSAGLSYSQLIAGAIRGALEAVHFKVYASATDTGANTEIRIRFDQVLKDSLPAGEDD</sequence>